<feature type="chain" id="PRO_0000219610" description="HTH-type transcriptional regulator SarV">
    <location>
        <begin position="1"/>
        <end position="116"/>
    </location>
</feature>
<feature type="DNA-binding region" description="H-T-H motif" evidence="2">
    <location>
        <begin position="51"/>
        <end position="74"/>
    </location>
</feature>
<protein>
    <recommendedName>
        <fullName>HTH-type transcriptional regulator SarV</fullName>
    </recommendedName>
    <alternativeName>
        <fullName>Staphylococcal accessory regulator V</fullName>
    </alternativeName>
</protein>
<reference key="1">
    <citation type="journal article" date="2001" name="Lancet">
        <title>Whole genome sequencing of meticillin-resistant Staphylococcus aureus.</title>
        <authorList>
            <person name="Kuroda M."/>
            <person name="Ohta T."/>
            <person name="Uchiyama I."/>
            <person name="Baba T."/>
            <person name="Yuzawa H."/>
            <person name="Kobayashi I."/>
            <person name="Cui L."/>
            <person name="Oguchi A."/>
            <person name="Aoki K."/>
            <person name="Nagai Y."/>
            <person name="Lian J.-Q."/>
            <person name="Ito T."/>
            <person name="Kanamori M."/>
            <person name="Matsumaru H."/>
            <person name="Maruyama A."/>
            <person name="Murakami H."/>
            <person name="Hosoyama A."/>
            <person name="Mizutani-Ui Y."/>
            <person name="Takahashi N.K."/>
            <person name="Sawano T."/>
            <person name="Inoue R."/>
            <person name="Kaito C."/>
            <person name="Sekimizu K."/>
            <person name="Hirakawa H."/>
            <person name="Kuhara S."/>
            <person name="Goto S."/>
            <person name="Yabuzaki J."/>
            <person name="Kanehisa M."/>
            <person name="Yamashita A."/>
            <person name="Oshima K."/>
            <person name="Furuya K."/>
            <person name="Yoshino C."/>
            <person name="Shiba T."/>
            <person name="Hattori M."/>
            <person name="Ogasawara N."/>
            <person name="Hayashi H."/>
            <person name="Hiramatsu K."/>
        </authorList>
    </citation>
    <scope>NUCLEOTIDE SEQUENCE [LARGE SCALE GENOMIC DNA]</scope>
    <source>
        <strain>Mu50 / ATCC 700699</strain>
    </source>
</reference>
<gene>
    <name type="primary">sarV</name>
    <name type="ordered locus">SAV2267</name>
</gene>
<comment type="function">
    <text evidence="1">Part of the pathway by which MgrA and SarA control autolysis.</text>
</comment>
<comment type="subcellular location">
    <subcellularLocation>
        <location evidence="1">Cytoplasm</location>
    </subcellularLocation>
</comment>
<comment type="similarity">
    <text evidence="3">Belongs to the SarA family.</text>
</comment>
<accession>Q99S05</accession>
<evidence type="ECO:0000250" key="1"/>
<evidence type="ECO:0000255" key="2"/>
<evidence type="ECO:0000305" key="3"/>
<organism>
    <name type="scientific">Staphylococcus aureus (strain Mu50 / ATCC 700699)</name>
    <dbReference type="NCBI Taxonomy" id="158878"/>
    <lineage>
        <taxon>Bacteria</taxon>
        <taxon>Bacillati</taxon>
        <taxon>Bacillota</taxon>
        <taxon>Bacilli</taxon>
        <taxon>Bacillales</taxon>
        <taxon>Staphylococcaceae</taxon>
        <taxon>Staphylococcus</taxon>
    </lineage>
</organism>
<name>SARV_STAAM</name>
<keyword id="KW-0010">Activator</keyword>
<keyword id="KW-0963">Cytoplasm</keyword>
<keyword id="KW-0238">DNA-binding</keyword>
<keyword id="KW-0804">Transcription</keyword>
<keyword id="KW-0805">Transcription regulation</keyword>
<keyword id="KW-0843">Virulence</keyword>
<sequence>MSNKVQRFIEAERELSQLKHWLKTTHKISIEEFVVLFKVYEAEKISGKELRDTLHFEMLWDTSKIDVIIRKIYKKELISKLRSETDERQVFYFYSTSQKKLLDKITKEIEVLSVTN</sequence>
<dbReference type="EMBL" id="BA000017">
    <property type="protein sequence ID" value="BAB58429.1"/>
    <property type="molecule type" value="Genomic_DNA"/>
</dbReference>
<dbReference type="RefSeq" id="WP_000066900.1">
    <property type="nucleotide sequence ID" value="NC_002758.2"/>
</dbReference>
<dbReference type="SMR" id="Q99S05"/>
<dbReference type="DNASU" id="1122292"/>
<dbReference type="KEGG" id="sav:SAV2267"/>
<dbReference type="HOGENOM" id="CLU_2095367_0_0_9"/>
<dbReference type="PhylomeDB" id="Q99S05"/>
<dbReference type="Proteomes" id="UP000002481">
    <property type="component" value="Chromosome"/>
</dbReference>
<dbReference type="GO" id="GO:0005737">
    <property type="term" value="C:cytoplasm"/>
    <property type="evidence" value="ECO:0007669"/>
    <property type="project" value="UniProtKB-SubCell"/>
</dbReference>
<dbReference type="GO" id="GO:0003677">
    <property type="term" value="F:DNA binding"/>
    <property type="evidence" value="ECO:0007669"/>
    <property type="project" value="UniProtKB-KW"/>
</dbReference>
<dbReference type="GO" id="GO:0006355">
    <property type="term" value="P:regulation of DNA-templated transcription"/>
    <property type="evidence" value="ECO:0007669"/>
    <property type="project" value="InterPro"/>
</dbReference>
<dbReference type="Gene3D" id="1.10.10.10">
    <property type="entry name" value="Winged helix-like DNA-binding domain superfamily/Winged helix DNA-binding domain"/>
    <property type="match status" value="1"/>
</dbReference>
<dbReference type="InterPro" id="IPR010166">
    <property type="entry name" value="SarA/Rot_dom"/>
</dbReference>
<dbReference type="InterPro" id="IPR055166">
    <property type="entry name" value="Transc_reg_Sar_Rot_HTH"/>
</dbReference>
<dbReference type="InterPro" id="IPR036388">
    <property type="entry name" value="WH-like_DNA-bd_sf"/>
</dbReference>
<dbReference type="InterPro" id="IPR036390">
    <property type="entry name" value="WH_DNA-bd_sf"/>
</dbReference>
<dbReference type="NCBIfam" id="TIGR01889">
    <property type="entry name" value="Staph_reg_Sar"/>
    <property type="match status" value="1"/>
</dbReference>
<dbReference type="Pfam" id="PF22381">
    <property type="entry name" value="Staph_reg_Sar_Rot"/>
    <property type="match status" value="1"/>
</dbReference>
<dbReference type="SUPFAM" id="SSF46785">
    <property type="entry name" value="Winged helix' DNA-binding domain"/>
    <property type="match status" value="1"/>
</dbReference>
<proteinExistence type="inferred from homology"/>